<sequence length="144" mass="16425">MAEELKEKRELEVEEDNTKKDNSDKKSKVKRRRRNYDDLDAEVTKDEKSRKTKSGKSGKNGSDSESEVDDAKLDTMISLEDEQEDDLAEIDTSNIIVTGRRTRGKIIDYKKAAEELAAEGKISLDEDEDEDDEDAKEDDGEFDE</sequence>
<reference key="1">
    <citation type="journal article" date="2007" name="Proc. Natl. Acad. Sci. U.S.A.">
        <title>Independent sorting-out of thousands of duplicated gene pairs in two yeast species descended from a whole-genome duplication.</title>
        <authorList>
            <person name="Scannell D.R."/>
            <person name="Frank A.C."/>
            <person name="Conant G.C."/>
            <person name="Byrne K.P."/>
            <person name="Woolfit M."/>
            <person name="Wolfe K.H."/>
        </authorList>
    </citation>
    <scope>NUCLEOTIDE SEQUENCE [LARGE SCALE GENOMIC DNA]</scope>
    <source>
        <strain>ATCC 22028 / DSM 70294 / BCRC 21397 / CBS 2163 / NBRC 10782 / NRRL Y-8283 / UCD 57-17</strain>
    </source>
</reference>
<feature type="chain" id="PRO_0000330221" description="Histone H2A.Z-specific chaperone CHZ1">
    <location>
        <begin position="1"/>
        <end position="144"/>
    </location>
</feature>
<feature type="region of interest" description="Disordered" evidence="2">
    <location>
        <begin position="1"/>
        <end position="85"/>
    </location>
</feature>
<feature type="region of interest" description="Disordered" evidence="2">
    <location>
        <begin position="117"/>
        <end position="144"/>
    </location>
</feature>
<feature type="compositionally biased region" description="Basic and acidic residues" evidence="2">
    <location>
        <begin position="1"/>
        <end position="26"/>
    </location>
</feature>
<feature type="compositionally biased region" description="Acidic residues" evidence="2">
    <location>
        <begin position="125"/>
        <end position="144"/>
    </location>
</feature>
<dbReference type="EMBL" id="DS480472">
    <property type="protein sequence ID" value="EDO15223.1"/>
    <property type="molecule type" value="Genomic_DNA"/>
</dbReference>
<dbReference type="RefSeq" id="XP_001643081.1">
    <property type="nucleotide sequence ID" value="XM_001643031.1"/>
</dbReference>
<dbReference type="SMR" id="A7TR90"/>
<dbReference type="FunCoup" id="A7TR90">
    <property type="interactions" value="53"/>
</dbReference>
<dbReference type="STRING" id="436907.A7TR90"/>
<dbReference type="GeneID" id="5543288"/>
<dbReference type="KEGG" id="vpo:Kpol_423p13"/>
<dbReference type="eggNOG" id="ENOG502SCUM">
    <property type="taxonomic scope" value="Eukaryota"/>
</dbReference>
<dbReference type="HOGENOM" id="CLU_126134_1_0_1"/>
<dbReference type="InParanoid" id="A7TR90"/>
<dbReference type="OMA" id="RTHYDDE"/>
<dbReference type="OrthoDB" id="4174291at2759"/>
<dbReference type="PhylomeDB" id="A7TR90"/>
<dbReference type="Proteomes" id="UP000000267">
    <property type="component" value="Unassembled WGS sequence"/>
</dbReference>
<dbReference type="GO" id="GO:0005634">
    <property type="term" value="C:nucleus"/>
    <property type="evidence" value="ECO:0007669"/>
    <property type="project" value="UniProtKB-SubCell"/>
</dbReference>
<dbReference type="GO" id="GO:0042393">
    <property type="term" value="F:histone binding"/>
    <property type="evidence" value="ECO:0007669"/>
    <property type="project" value="EnsemblFungi"/>
</dbReference>
<dbReference type="GO" id="GO:0006338">
    <property type="term" value="P:chromatin remodeling"/>
    <property type="evidence" value="ECO:0007669"/>
    <property type="project" value="EnsemblFungi"/>
</dbReference>
<dbReference type="InterPro" id="IPR019098">
    <property type="entry name" value="Histone_chaperone_domain_CHZ"/>
</dbReference>
<dbReference type="Pfam" id="PF09649">
    <property type="entry name" value="CHZ"/>
    <property type="match status" value="1"/>
</dbReference>
<dbReference type="SMART" id="SM01082">
    <property type="entry name" value="CHZ"/>
    <property type="match status" value="1"/>
</dbReference>
<gene>
    <name type="primary">CHZ1</name>
    <name type="ORF">Kpol_423p13</name>
</gene>
<protein>
    <recommendedName>
        <fullName>Histone H2A.Z-specific chaperone CHZ1</fullName>
    </recommendedName>
</protein>
<comment type="function">
    <text evidence="1">Forms a chaperone-bound H2A.Z-H2B complex that acts as a source for SWR1 complex-dependent H2A to H2A.Z histone replacement in chromatin.</text>
</comment>
<comment type="subunit">
    <text evidence="1">Forms a heterotrimer with H2A.Z-H2B, stabilizing the association of the histone dimer. Also, with a lower affinity, forms a heterotrimer with H2A-H2B (By similarity).</text>
</comment>
<comment type="subcellular location">
    <subcellularLocation>
        <location evidence="1">Nucleus</location>
    </subcellularLocation>
</comment>
<comment type="similarity">
    <text evidence="3">Belongs to the CHZ1 family.</text>
</comment>
<accession>A7TR90</accession>
<keyword id="KW-0143">Chaperone</keyword>
<keyword id="KW-0539">Nucleus</keyword>
<keyword id="KW-1185">Reference proteome</keyword>
<organism>
    <name type="scientific">Vanderwaltozyma polyspora (strain ATCC 22028 / DSM 70294 / BCRC 21397 / CBS 2163 / NBRC 10782 / NRRL Y-8283 / UCD 57-17)</name>
    <name type="common">Kluyveromyces polysporus</name>
    <dbReference type="NCBI Taxonomy" id="436907"/>
    <lineage>
        <taxon>Eukaryota</taxon>
        <taxon>Fungi</taxon>
        <taxon>Dikarya</taxon>
        <taxon>Ascomycota</taxon>
        <taxon>Saccharomycotina</taxon>
        <taxon>Saccharomycetes</taxon>
        <taxon>Saccharomycetales</taxon>
        <taxon>Saccharomycetaceae</taxon>
        <taxon>Vanderwaltozyma</taxon>
    </lineage>
</organism>
<evidence type="ECO:0000250" key="1"/>
<evidence type="ECO:0000256" key="2">
    <source>
        <dbReference type="SAM" id="MobiDB-lite"/>
    </source>
</evidence>
<evidence type="ECO:0000305" key="3"/>
<proteinExistence type="inferred from homology"/>
<name>CHZ1_VANPO</name>